<protein>
    <recommendedName>
        <fullName>Phosphoprotein</fullName>
        <shortName>Protein P</shortName>
    </recommendedName>
</protein>
<organismHost>
    <name type="scientific">Cavia cutleri</name>
    <name type="common">Guinea pig</name>
    <dbReference type="NCBI Taxonomy" id="10144"/>
</organismHost>
<organismHost>
    <name type="scientific">Cricetidae sp.</name>
    <name type="common">Hamster</name>
    <dbReference type="NCBI Taxonomy" id="36483"/>
</organismHost>
<organismHost>
    <name type="scientific">Mus musculus</name>
    <name type="common">Mouse</name>
    <dbReference type="NCBI Taxonomy" id="10090"/>
</organismHost>
<organismHost>
    <name type="scientific">Rattus norvegicus</name>
    <name type="common">Rat</name>
    <dbReference type="NCBI Taxonomy" id="10116"/>
</organismHost>
<accession>P04859</accession>
<dbReference type="PIR" id="A28985">
    <property type="entry name" value="RRNZHS"/>
</dbReference>
<dbReference type="PDB" id="1EZJ">
    <property type="method" value="X-ray"/>
    <property type="resolution" value="1.90 A"/>
    <property type="chains" value="A=320-433"/>
</dbReference>
<dbReference type="PDB" id="1R4G">
    <property type="method" value="NMR"/>
    <property type="chains" value="A=516-568"/>
</dbReference>
<dbReference type="PDBsum" id="1EZJ"/>
<dbReference type="PDBsum" id="1R4G"/>
<dbReference type="BMRB" id="P04859"/>
<dbReference type="SMR" id="P04859"/>
<dbReference type="iPTMnet" id="P04859"/>
<dbReference type="EvolutionaryTrace" id="P04859"/>
<dbReference type="GO" id="GO:0030430">
    <property type="term" value="C:host cell cytoplasm"/>
    <property type="evidence" value="ECO:0007669"/>
    <property type="project" value="UniProtKB-SubCell"/>
</dbReference>
<dbReference type="GO" id="GO:0032991">
    <property type="term" value="C:protein-containing complex"/>
    <property type="evidence" value="ECO:0000315"/>
    <property type="project" value="CAFA"/>
</dbReference>
<dbReference type="GO" id="GO:0097718">
    <property type="term" value="F:disordered domain specific binding"/>
    <property type="evidence" value="ECO:0000353"/>
    <property type="project" value="CAFA"/>
</dbReference>
<dbReference type="GO" id="GO:0003723">
    <property type="term" value="F:RNA binding"/>
    <property type="evidence" value="ECO:0007669"/>
    <property type="project" value="InterPro"/>
</dbReference>
<dbReference type="GO" id="GO:0003968">
    <property type="term" value="F:RNA-directed RNA polymerase activity"/>
    <property type="evidence" value="ECO:0007669"/>
    <property type="project" value="InterPro"/>
</dbReference>
<dbReference type="GO" id="GO:0006351">
    <property type="term" value="P:DNA-templated transcription"/>
    <property type="evidence" value="ECO:0007669"/>
    <property type="project" value="InterPro"/>
</dbReference>
<dbReference type="GO" id="GO:0039689">
    <property type="term" value="P:negative stranded viral RNA replication"/>
    <property type="evidence" value="ECO:0000314"/>
    <property type="project" value="UniProtKB"/>
</dbReference>
<dbReference type="CDD" id="cd21031">
    <property type="entry name" value="MEV_P-protein-C_like"/>
    <property type="match status" value="1"/>
</dbReference>
<dbReference type="DisProt" id="DP00939"/>
<dbReference type="Gene3D" id="1.10.287.340">
    <property type="match status" value="1"/>
</dbReference>
<dbReference type="Gene3D" id="1.10.8.10">
    <property type="entry name" value="DNA helicase RuvA subunit, C-terminal domain"/>
    <property type="match status" value="1"/>
</dbReference>
<dbReference type="Gene3D" id="1.10.287.320">
    <property type="entry name" value="Viral phosphoprotein oligmorisation site domain"/>
    <property type="match status" value="1"/>
</dbReference>
<dbReference type="InterPro" id="IPR002693">
    <property type="entry name" value="Paramyxo_PProtein_C"/>
</dbReference>
<dbReference type="InterPro" id="IPR043097">
    <property type="entry name" value="PProtein_oligomer_dom1"/>
</dbReference>
<dbReference type="InterPro" id="IPR016075">
    <property type="entry name" value="RNA_pol_Pprot-P_XD_paramyxovir"/>
</dbReference>
<dbReference type="Pfam" id="PF01806">
    <property type="entry name" value="Paramyxo_P"/>
    <property type="match status" value="1"/>
</dbReference>
<dbReference type="SUPFAM" id="SSF58034">
    <property type="entry name" value="Multimerization domain of the phosphoprotein from sendai virus"/>
    <property type="match status" value="1"/>
</dbReference>
<dbReference type="SUPFAM" id="SSF101089">
    <property type="entry name" value="Phosphoprotein XD domain"/>
    <property type="match status" value="1"/>
</dbReference>
<evidence type="ECO:0000250" key="1">
    <source>
        <dbReference type="UniProtKB" id="P06162"/>
    </source>
</evidence>
<evidence type="ECO:0000250" key="2">
    <source>
        <dbReference type="UniProtKB" id="Q77M42"/>
    </source>
</evidence>
<evidence type="ECO:0000256" key="3">
    <source>
        <dbReference type="SAM" id="MobiDB-lite"/>
    </source>
</evidence>
<evidence type="ECO:0000269" key="4">
    <source>
    </source>
</evidence>
<evidence type="ECO:0000269" key="5">
    <source>
    </source>
</evidence>
<evidence type="ECO:0000269" key="6">
    <source>
    </source>
</evidence>
<evidence type="ECO:0000269" key="7">
    <source>
    </source>
</evidence>
<evidence type="ECO:0000269" key="8">
    <source>
    </source>
</evidence>
<evidence type="ECO:0000269" key="9">
    <source>
    </source>
</evidence>
<evidence type="ECO:0000269" key="10">
    <source>
    </source>
</evidence>
<evidence type="ECO:0000269" key="11">
    <source>
    </source>
</evidence>
<evidence type="ECO:0000269" key="12">
    <source>
    </source>
</evidence>
<evidence type="ECO:0000269" key="13">
    <source>
    </source>
</evidence>
<evidence type="ECO:0000269" key="14">
    <source>
    </source>
</evidence>
<evidence type="ECO:0000305" key="15"/>
<evidence type="ECO:0000305" key="16">
    <source>
    </source>
</evidence>
<evidence type="ECO:0000305" key="17">
    <source>
    </source>
</evidence>
<evidence type="ECO:0007829" key="18">
    <source>
        <dbReference type="PDB" id="1EZJ"/>
    </source>
</evidence>
<evidence type="ECO:0007829" key="19">
    <source>
        <dbReference type="PDB" id="1R4G"/>
    </source>
</evidence>
<reference key="1">
    <citation type="journal article" date="1983" name="Cell">
        <title>Sendai virus contains overlapping genes expressed from a single mRNA.</title>
        <authorList>
            <person name="Giorgi C."/>
            <person name="Blumberg B.M."/>
            <person name="Kolakofsky D."/>
        </authorList>
    </citation>
    <scope>NUCLEOTIDE SEQUENCE [GENOMIC RNA]</scope>
</reference>
<reference key="2">
    <citation type="submission" date="2005-01" db="UniProtKB">
        <authorList>
            <person name="Kolakofsky D."/>
        </authorList>
    </citation>
    <scope>NUCLEOTIDE SEQUENCE [GENOMIC RNA]</scope>
</reference>
<reference key="3">
    <citation type="journal article" date="1990" name="Virology">
        <title>Separate domains of Sendai virus P protein are required for binding to viral nucleocapsids.</title>
        <authorList>
            <person name="Ryan K.W."/>
            <person name="Portner A."/>
        </authorList>
    </citation>
    <scope>INTERACTION WITH THE NUCLEOCAPSID</scope>
</reference>
<reference key="4">
    <citation type="journal article" date="1994" name="Virology">
        <title>An acidic activation-like domain of the Sendai virus P protein is required for RNA SYnthesis and encapsidation.</title>
        <authorList>
            <person name="Curran J."/>
            <person name="Pelet T."/>
            <person name="Kolakofsky D."/>
        </authorList>
    </citation>
    <scope>INTERACTION WITH L PROTEIN</scope>
</reference>
<reference key="5">
    <citation type="journal article" date="1995" name="J. Virol.">
        <title>An N-terminal domain of the Sendai paramyxovirus P protein acts as a chaperone for the NP protein during the nascent chain assembly step of genome replication.</title>
        <authorList>
            <person name="Curran J."/>
            <person name="Marq J.-B."/>
            <person name="Kolakofsky D."/>
        </authorList>
    </citation>
    <scope>INTERACTION WITH NUCLEOPROTEIN N0</scope>
</reference>
<reference key="6">
    <citation type="journal article" date="1995" name="Virology">
        <title>Paramyxovirus phosphoproteins form homotrimers as determined by an epitope dilution assay, via predicted coiled coils.</title>
        <authorList>
            <person name="Curran J."/>
            <person name="Boeck R."/>
            <person name="Lin-Marq N."/>
            <person name="Lupas A."/>
            <person name="Kolakofsky D."/>
        </authorList>
    </citation>
    <scope>DOMAIN</scope>
</reference>
<reference key="7">
    <citation type="journal article" date="1996" name="Virology">
        <title>Sendai virus P protein is constitutively phosphorylated at serine249: high phosphorylation potential of the P protein.</title>
        <authorList>
            <person name="Byrappa S."/>
            <person name="Pan Y.-B."/>
            <person name="Gupta K.C."/>
        </authorList>
    </citation>
    <scope>PHOSPHORYLATION AT SER-249</scope>
</reference>
<reference key="8">
    <citation type="journal article" date="1997" name="EMBO J.">
        <title>The paramyxovirus, Sendai virus, V protein encodes a luxury function required for viral pathogenesis.</title>
        <authorList>
            <person name="Kato A."/>
            <person name="Kiyotani K."/>
            <person name="Sakai Y."/>
            <person name="Yoshida T."/>
            <person name="Nagai Y."/>
        </authorList>
    </citation>
    <scope>RNA EDITING</scope>
</reference>
<reference key="9">
    <citation type="journal article" date="1997" name="J. Biol. Chem.">
        <title>Phosphorylation of Sendai virus phosphoprotein by cellular protein kinase C zeta.</title>
        <authorList>
            <person name="Huntley C.C."/>
            <person name="De B.P."/>
            <person name="Banerjee A.K."/>
        </authorList>
    </citation>
    <scope>PHOSPHORYLATION BY PKC ZETA</scope>
</reference>
<reference key="10">
    <citation type="journal article" date="1999" name="Virology">
        <title>Role of primary constitutive phosphorylation of Sendai virus P and V proteins in viral replication and pathogenesis.</title>
        <authorList>
            <person name="Hu C.-J."/>
            <person name="Kato A."/>
            <person name="Bowman M.C."/>
            <person name="Kiyotani K."/>
            <person name="Yoshida T."/>
            <person name="Moyer S.A."/>
            <person name="Nagai Y."/>
            <person name="Gupta K.C."/>
        </authorList>
    </citation>
    <scope>PHOSPHORYLATION AT SER-249</scope>
    <scope>MUTAGENESIS OF SER-249 AND PRO-250</scope>
</reference>
<reference key="11">
    <citation type="journal article" date="1999" name="J. Virol.">
        <title>Dissection of individual functions of the Sendai virus phosphoprotein in transcription.</title>
        <authorList>
            <person name="Bowman M.C."/>
            <person name="Smallwood S."/>
            <person name="Moyer S.A."/>
        </authorList>
    </citation>
    <scope>MUTAGENESIS OF 408-LYS-ARG-409; 412-GLU--GLU-416; SER-419; LEU-421; LEU-425; SER-426; LEU-428; ILE-430; 433-ASP--LYS-437; GLY-436; LYS-453; 455-LYS-GLU-456; 460-LYS--ASP-465 AND 469-GLU--ASP-473</scope>
</reference>
<reference key="12">
    <citation type="journal article" date="2000" name="Virology">
        <title>Functional significance of alternate phosphorylation in Sendai virus P protein.</title>
        <authorList>
            <person name="Hu C.-J."/>
            <person name="Gupta K.C."/>
        </authorList>
    </citation>
    <scope>PHOSPHORYLATION AT SER-68; SER-125; SER-192; SER-257; SER-260; SER-447 AND SER-449</scope>
    <scope>MUTAGENESIS OF SER-68; SER-125; SER-192; SER-257; SER-260; SER-447 AND SER-449</scope>
</reference>
<reference key="13">
    <citation type="journal article" date="2002" name="J. Virol.">
        <title>The C-terminal 88 amino acids of the Sendai virus P protein have multiple functions separable by mutation.</title>
        <authorList>
            <person name="Tuckis J."/>
            <person name="Smallwood S."/>
            <person name="Feller J.A."/>
            <person name="Moyer S.A."/>
        </authorList>
    </citation>
    <scope>MUTAGENESIS OF 482-ARG--GLU-485; 487-ARG--GLU-489; 497-GLU--ASP-499; 506-ASN-ARG-509; 514-LYS--LYS-516; 524-LEU--ILE-526; 533-ARG--LYS-536; 549-ASP--LYS-533 AND 560-GLU--ASP-562</scope>
</reference>
<reference key="14">
    <citation type="journal article" date="2000" name="Nat. Struct. Biol.">
        <title>Tetrameric coiled coil domain of Sendai virus phosphoprotein.</title>
        <authorList>
            <person name="Tarbouriech N."/>
            <person name="Curran J."/>
            <person name="Ruigrok R.W.H."/>
            <person name="Burmeister W.P."/>
        </authorList>
    </citation>
    <scope>X-RAY CRYSTALLOGRAPHY (1.90 ANGSTROMS) OF 320-433</scope>
    <scope>SUBUNIT</scope>
    <scope>COILED COIL</scope>
    <scope>DOMAIN</scope>
    <scope>INTERACTION WITH POLYMERASE L</scope>
</reference>
<reference key="15">
    <citation type="journal article" date="2004" name="Virology">
        <title>Structure and dynamics of the nucleocapsid-binding domain of the Sendai virus phosphoprotein in solution.</title>
        <authorList>
            <person name="Blanchard L."/>
            <person name="Tarbouriech N."/>
            <person name="Blackledge M."/>
            <person name="Timmins P."/>
            <person name="Burmeister W.P."/>
            <person name="Ruigrok R.W.H."/>
            <person name="Marion D."/>
        </authorList>
    </citation>
    <scope>STRUCTURE BY NMR OF 516-568</scope>
</reference>
<comment type="function">
    <text evidence="1 2">Essential cofactor of the RNA polymerase L that plays a central role in the transcription and replication by forming the polymerase complex with RNA polymerase L and recruiting L to the genomic N-RNA template for RNA synthesis. Also plays a central role in the encapsidation of nascent RNA chains by forming the encapsidation complex with the nucleocapsid protein N (N-P complex). Acts as a chaperone for newly synthesized free N protein, so-called N0, allowing encapsidation of nascent RNA chains during replication (By similarity). The nucleoprotein protein N prevents excessive phosphorylation of P, which leads to down-regulation of viral transcription/ replication. Participates, together with N, in the formation of viral factories (viroplasms), which are large inclusions in the host cytoplasm where replication takes place (By similarity). Recruits host PI4KB and remodel the host endoplasmic reticulum membrane to form viral replication factories (By similarity).</text>
</comment>
<comment type="subunit">
    <text evidence="7 10 16 17">Homotetramer (PubMed:10966649). Interacts (via multimerization domain) with polymerase L; this interaction forms the polymerase complex (PubMed:10966649, PubMed:8030249). Interacts (via N-terminus) with N0; this interaction allows P to chaperon N0 before encapsidation and form the N-P complex (Probable). Interacts (via C-terminus) with N-RNA template; this interaction positions the polymerase on the template (Probable).</text>
</comment>
<comment type="subcellular location">
    <subcellularLocation>
        <location>Host cytoplasm</location>
    </subcellularLocation>
</comment>
<comment type="domain">
    <text evidence="1 7 8">The N-terminus consists of a long intrinsically disordered tail (By similarity). The central part contains the coiled-coil multimerization domain (PMD) (PubMed:10966649). Forms a four-stranded coiled coil structure (PubMed:10966649). The C-terminus constitutes the alpha-helical domain that binds to the nucleocapsid (N-RNA complex) (PubMed:10966649, PubMed:11739672).</text>
</comment>
<comment type="PTM">
    <text evidence="5 6 12 14">Phosphorylated by PKC/PRKCZ, and other unknown kinases. Phosphorylation is necessary for viral transcription and replication. The N-terminus contains the majority of phosphorylated sites. Ser-249 is the major site of phosphorylation, but is not necessary for most functions.</text>
</comment>
<comment type="RNA editing">
    <location>
        <position position="318" evidence="13"/>
    </location>
    <text>Partially edited. RNA editing at this position consists of an insertion of one or two guanine nucleotides. The sequence displayed here is the P protein, derived from the unedited RNA. The edited RNA gives rise to the V protein (+1G) (AC P69280), and the W protein (+2G) (AC P69281).</text>
</comment>
<comment type="miscellaneous">
    <text>The P/V/C gene has two overlapping open reading frames. One encodes the P/V/W proteins and the other the C/Y proteins.</text>
</comment>
<comment type="similarity">
    <text evidence="15">Belongs to the respirovirus P protein family.</text>
</comment>
<gene>
    <name type="primary">P/V/C</name>
</gene>
<keyword id="KW-0002">3D-structure</keyword>
<keyword id="KW-0143">Chaperone</keyword>
<keyword id="KW-0175">Coiled coil</keyword>
<keyword id="KW-1035">Host cytoplasm</keyword>
<keyword id="KW-0597">Phosphoprotein</keyword>
<keyword id="KW-0691">RNA editing</keyword>
<keyword id="KW-0693">Viral RNA replication</keyword>
<sequence length="568" mass="62004">MDQDAFILKEDSEVEREAPGGRESLSDVIGFLDAVLSSEPTDIGGDRSWLHNTINTPQGPGSAHRAKSEGEGEVSTPSTQDNRSGEESRVSGRTSKPEAEAHAGNLDKQNIHRAFGGRTGTNSVSQDLGDGGDSGILENPPNERGYPRSGIEDENREMAAHPDKRGEDQAEGLPEEVRGGTSLPDEGEGGASNNGRSMEPGSSHSARVTGVLVIPSPELEEAVLRRNKRRPTNSGSKPLTPATVPGTRSPPLNRYNSTGSPPGKPPSTQDEHINSGDTPAVRVKDRKPPIGTRSVSDCPANGRPIHPGLESDSTKKGIGENTSSMKEMATLLTSLGVIQSAQEFESSRDASYVFARRALKSANYAEMTFNVCGLILSAEKSSARKVDENKQLLKQIQESVESFRDIYKRFSEYQKEQNSLLMSNLSTLHIITDRGGKTDNTDSLTRSPSVFAKSKENKTKATRFDPSMETLEDMKYKPDLIREDEFRDEIRNPVYQERDTEPRASNASRLLPSKEKPTMHSLRLVIESSPLSRAEKAAYVKSLSKCKTDQEVKAVMELVEEDIESLTN</sequence>
<organism>
    <name type="scientific">Sendai virus (strain Harris)</name>
    <name type="common">SeV</name>
    <dbReference type="NCBI Taxonomy" id="11196"/>
    <lineage>
        <taxon>Viruses</taxon>
        <taxon>Riboviria</taxon>
        <taxon>Orthornavirae</taxon>
        <taxon>Negarnaviricota</taxon>
        <taxon>Haploviricotina</taxon>
        <taxon>Monjiviricetes</taxon>
        <taxon>Mononegavirales</taxon>
        <taxon>Paramyxoviridae</taxon>
        <taxon>Feraresvirinae</taxon>
        <taxon>Respirovirus</taxon>
        <taxon>Respirovirus muris</taxon>
    </lineage>
</organism>
<feature type="chain" id="PRO_0000142714" description="Phosphoprotein">
    <location>
        <begin position="1"/>
        <end position="568"/>
    </location>
</feature>
<feature type="region of interest" description="Disordered" evidence="3">
    <location>
        <begin position="1"/>
        <end position="23"/>
    </location>
</feature>
<feature type="region of interest" description="N0 binding" evidence="7 9">
    <location>
        <begin position="33"/>
        <end position="41"/>
    </location>
</feature>
<feature type="region of interest" description="Disordered" evidence="3">
    <location>
        <begin position="38"/>
        <end position="320"/>
    </location>
</feature>
<feature type="region of interest" description="Multimerization" evidence="1">
    <location>
        <begin position="344"/>
        <end position="411"/>
    </location>
</feature>
<feature type="region of interest" description="L protein binding" evidence="7 11">
    <location>
        <begin position="412"/>
        <end position="445"/>
    </location>
</feature>
<feature type="region of interest" description="Interaction with the nucleocapsid (N-RNA)" evidence="11">
    <location>
        <begin position="479"/>
        <end position="568"/>
    </location>
</feature>
<feature type="region of interest" description="Disordered" evidence="3">
    <location>
        <begin position="496"/>
        <end position="516"/>
    </location>
</feature>
<feature type="region of interest" description="Formation of N-RNA complex involved in transcription and replication" evidence="1">
    <location>
        <begin position="547"/>
        <end position="566"/>
    </location>
</feature>
<feature type="coiled-coil region" evidence="7">
    <location>
        <begin position="364"/>
        <end position="429"/>
    </location>
</feature>
<feature type="compositionally biased region" description="Basic and acidic residues" evidence="3">
    <location>
        <begin position="7"/>
        <end position="20"/>
    </location>
</feature>
<feature type="compositionally biased region" description="Polar residues" evidence="3">
    <location>
        <begin position="50"/>
        <end position="59"/>
    </location>
</feature>
<feature type="compositionally biased region" description="Basic and acidic residues" evidence="3">
    <location>
        <begin position="83"/>
        <end position="101"/>
    </location>
</feature>
<feature type="compositionally biased region" description="Basic and acidic residues" evidence="3">
    <location>
        <begin position="150"/>
        <end position="168"/>
    </location>
</feature>
<feature type="compositionally biased region" description="Polar residues" evidence="3">
    <location>
        <begin position="191"/>
        <end position="206"/>
    </location>
</feature>
<feature type="modified residue" description="Phosphoserine; by host" evidence="6">
    <location>
        <position position="68"/>
    </location>
</feature>
<feature type="modified residue" description="Phosphoserine; by host" evidence="6">
    <location>
        <position position="125"/>
    </location>
</feature>
<feature type="modified residue" description="Phosphoserine; by host" evidence="6">
    <location>
        <position position="192"/>
    </location>
</feature>
<feature type="modified residue" description="Phosphoserine; by host" evidence="5 12">
    <location>
        <position position="249"/>
    </location>
</feature>
<feature type="modified residue" description="Phosphoserine; by host" evidence="6">
    <location>
        <position position="257"/>
    </location>
</feature>
<feature type="modified residue" description="Phosphoserine; by host" evidence="6">
    <location>
        <position position="260"/>
    </location>
</feature>
<feature type="modified residue" description="Phosphoserine; by host" evidence="6">
    <location>
        <position position="447"/>
    </location>
</feature>
<feature type="modified residue" description="Phosphoserine; by host" evidence="6">
    <location>
        <position position="449"/>
    </location>
</feature>
<feature type="sequence variant">
    <original>S</original>
    <variation>T</variation>
    <location>
        <position position="311"/>
    </location>
</feature>
<feature type="mutagenesis site" description="Complete loss of phosphorylation." evidence="6">
    <original>S</original>
    <variation>A</variation>
    <location>
        <position position="68"/>
    </location>
</feature>
<feature type="mutagenesis site" description="Complete loss of phosphorylation." evidence="6">
    <original>S</original>
    <variation>A</variation>
    <location>
        <position position="125"/>
    </location>
</feature>
<feature type="mutagenesis site" description="Complete loss of phosphorylation." evidence="6">
    <original>S</original>
    <variation>A</variation>
    <location>
        <position position="192"/>
    </location>
</feature>
<feature type="mutagenesis site" description="No effect." evidence="5">
    <original>S</original>
    <variation>A</variation>
    <location>
        <position position="249"/>
    </location>
</feature>
<feature type="mutagenesis site" description="No effect." evidence="5">
    <original>S</original>
    <variation>D</variation>
    <location>
        <position position="249"/>
    </location>
</feature>
<feature type="mutagenesis site" description="Prevents S-249 phosphorylation. No effect on P protein functions." evidence="5">
    <original>P</original>
    <variation>A</variation>
    <location>
        <position position="250"/>
    </location>
</feature>
<feature type="mutagenesis site" description="Complete loss of phosphorylation." evidence="6">
    <original>S</original>
    <variation>A</variation>
    <location>
        <position position="257"/>
    </location>
</feature>
<feature type="mutagenesis site" description="Complete loss of phosphorylation." evidence="6">
    <original>S</original>
    <variation>A</variation>
    <location>
        <position position="260"/>
    </location>
</feature>
<feature type="mutagenesis site" description="80% loss of in vitro transcription." evidence="4">
    <original>KR</original>
    <variation>AA</variation>
    <location>
        <begin position="408"/>
        <end position="409"/>
    </location>
</feature>
<feature type="mutagenesis site" description="60% loss of in vitro transcription." evidence="4">
    <original>EYQKE</original>
    <variation>AYQAA</variation>
    <location>
        <begin position="412"/>
        <end position="416"/>
    </location>
</feature>
<feature type="mutagenesis site" description="No effect." evidence="4">
    <original>S</original>
    <variation>A</variation>
    <location>
        <position position="419"/>
    </location>
</feature>
<feature type="mutagenesis site" description="80% loss of in vitro transcription." evidence="4">
    <original>L</original>
    <variation>A</variation>
    <location>
        <position position="421"/>
    </location>
</feature>
<feature type="mutagenesis site" description="80% loss of in vitro transcription." evidence="4">
    <original>L</original>
    <variation>A</variation>
    <location>
        <position position="425"/>
    </location>
</feature>
<feature type="mutagenesis site" description="No effect." evidence="4">
    <original>S</original>
    <variation>A</variation>
    <location>
        <position position="426"/>
    </location>
</feature>
<feature type="mutagenesis site" description="60% loss of in vitro transcription." evidence="4">
    <original>L</original>
    <variation>A</variation>
    <location>
        <position position="428"/>
    </location>
</feature>
<feature type="mutagenesis site" description="No effect." evidence="4">
    <original>I</original>
    <variation>A</variation>
    <location>
        <position position="430"/>
    </location>
</feature>
<feature type="mutagenesis site" description="80% loss of in vitro transcription." evidence="4">
    <original>DRGGK</original>
    <variation>AAGGA</variation>
    <location>
        <begin position="433"/>
        <end position="437"/>
    </location>
</feature>
<feature type="mutagenesis site" description="No effect." evidence="4">
    <original>G</original>
    <variation>A</variation>
    <location>
        <position position="436"/>
    </location>
</feature>
<feature type="mutagenesis site" description="Complete loss of phosphorylation." evidence="6">
    <original>S</original>
    <variation>A</variation>
    <location>
        <position position="447"/>
    </location>
</feature>
<feature type="mutagenesis site" description="Complete loss of phosphorylation." evidence="6">
    <original>S</original>
    <variation>A</variation>
    <location>
        <position position="449"/>
    </location>
</feature>
<feature type="mutagenesis site" description="60% loss of in vitro transcription." evidence="4">
    <original>K</original>
    <variation>A</variation>
    <location>
        <position position="453"/>
    </location>
</feature>
<feature type="mutagenesis site" description="40% loss of in vitro transcription." evidence="4">
    <original>KE</original>
    <variation>AA</variation>
    <location>
        <begin position="455"/>
        <end position="456"/>
    </location>
</feature>
<feature type="mutagenesis site" description="80% loss of in vitro transcription." evidence="4">
    <original>KATRFD</original>
    <variation>AATAFA</variation>
    <location>
        <begin position="460"/>
        <end position="465"/>
    </location>
</feature>
<feature type="mutagenesis site" description="60% loss of in vitro transcription." evidence="4">
    <original>ETLED</original>
    <variation>ATLAA</variation>
    <location>
        <begin position="469"/>
        <end position="473"/>
    </location>
</feature>
<feature type="mutagenesis site" description="Complete loss of in vitro replication and N0 binding." evidence="8">
    <original>REDE</original>
    <variation>AAAA</variation>
    <location>
        <begin position="482"/>
        <end position="485"/>
    </location>
</feature>
<feature type="mutagenesis site" description="Complete loss of N0 binding." evidence="8">
    <original>RDE</original>
    <variation>AAA</variation>
    <location>
        <begin position="487"/>
        <end position="489"/>
    </location>
</feature>
<feature type="mutagenesis site" description="No effect." evidence="8">
    <original>ERD</original>
    <variation>AAA</variation>
    <location>
        <begin position="497"/>
        <end position="499"/>
    </location>
</feature>
<feature type="mutagenesis site" description="Complete loss of transcription and replication." evidence="8">
    <original>NASR</original>
    <variation>AASA</variation>
    <location>
        <begin position="506"/>
        <end position="509"/>
    </location>
</feature>
<feature type="mutagenesis site" description="56% loss of transcription." evidence="8">
    <original>KEK</original>
    <variation>AAA</variation>
    <location>
        <begin position="514"/>
        <end position="516"/>
    </location>
</feature>
<feature type="mutagenesis site" description="Complete loss of transcription, replication and N0 binding." evidence="8">
    <original>LVI</original>
    <variation>AAA</variation>
    <location>
        <begin position="524"/>
        <end position="526"/>
    </location>
</feature>
<feature type="mutagenesis site" description="50% loss of transcription. Completely abolishes N0 binding." evidence="8">
    <original>RAEK</original>
    <variation>AAAA</variation>
    <location>
        <begin position="533"/>
        <end position="536"/>
    </location>
</feature>
<feature type="mutagenesis site" description="50% loss of transcription.">
    <original>DQEVK</original>
    <variation>AQAVA</variation>
    <location>
        <begin position="549"/>
        <end position="553"/>
    </location>
</feature>
<feature type="mutagenesis site" description="Complete loss of transcription, in vitro replication and N0 binding." evidence="8">
    <original>EED</original>
    <variation>AAA</variation>
    <location>
        <begin position="560"/>
        <end position="562"/>
    </location>
</feature>
<feature type="helix" evidence="18">
    <location>
        <begin position="322"/>
        <end position="334"/>
    </location>
</feature>
<feature type="strand" evidence="18">
    <location>
        <begin position="337"/>
        <end position="339"/>
    </location>
</feature>
<feature type="helix" evidence="18">
    <location>
        <begin position="341"/>
        <end position="344"/>
    </location>
</feature>
<feature type="helix" evidence="18">
    <location>
        <begin position="350"/>
        <end position="359"/>
    </location>
</feature>
<feature type="helix" evidence="18">
    <location>
        <begin position="364"/>
        <end position="424"/>
    </location>
</feature>
<feature type="helix" evidence="18">
    <location>
        <begin position="425"/>
        <end position="428"/>
    </location>
</feature>
<feature type="helix" evidence="19">
    <location>
        <begin position="519"/>
        <end position="526"/>
    </location>
</feature>
<feature type="helix" evidence="19">
    <location>
        <begin position="534"/>
        <end position="544"/>
    </location>
</feature>
<feature type="helix" evidence="19">
    <location>
        <begin position="550"/>
        <end position="566"/>
    </location>
</feature>
<name>PHOSP_SENDH</name>
<proteinExistence type="evidence at protein level"/>